<protein>
    <recommendedName>
        <fullName>Probable E3 ubiquitin-protein ligase XBOS34</fullName>
        <ecNumber>2.3.2.27</ecNumber>
    </recommendedName>
    <alternativeName>
        <fullName>Ankyrin repeat domain and RING finger-containing protein XBOS34</fullName>
    </alternativeName>
    <alternativeName>
        <fullName>RING-type E3 ubiquitin transferase XBOS34</fullName>
    </alternativeName>
    <alternativeName>
        <fullName>XB3 protein homolog 4</fullName>
    </alternativeName>
</protein>
<reference key="1">
    <citation type="journal article" date="2005" name="Nature">
        <title>The map-based sequence of the rice genome.</title>
        <authorList>
            <consortium name="International rice genome sequencing project (IRGSP)"/>
        </authorList>
    </citation>
    <scope>NUCLEOTIDE SEQUENCE [LARGE SCALE GENOMIC DNA]</scope>
    <source>
        <strain>cv. Nipponbare</strain>
    </source>
</reference>
<reference key="2">
    <citation type="journal article" date="2008" name="Nucleic Acids Res.">
        <title>The rice annotation project database (RAP-DB): 2008 update.</title>
        <authorList>
            <consortium name="The rice annotation project (RAP)"/>
        </authorList>
    </citation>
    <scope>GENOME REANNOTATION</scope>
    <source>
        <strain>cv. Nipponbare</strain>
    </source>
</reference>
<reference key="3">
    <citation type="journal article" date="2013" name="Rice">
        <title>Improvement of the Oryza sativa Nipponbare reference genome using next generation sequence and optical map data.</title>
        <authorList>
            <person name="Kawahara Y."/>
            <person name="de la Bastide M."/>
            <person name="Hamilton J.P."/>
            <person name="Kanamori H."/>
            <person name="McCombie W.R."/>
            <person name="Ouyang S."/>
            <person name="Schwartz D.C."/>
            <person name="Tanaka T."/>
            <person name="Wu J."/>
            <person name="Zhou S."/>
            <person name="Childs K.L."/>
            <person name="Davidson R.M."/>
            <person name="Lin H."/>
            <person name="Quesada-Ocampo L."/>
            <person name="Vaillancourt B."/>
            <person name="Sakai H."/>
            <person name="Lee S.S."/>
            <person name="Kim J."/>
            <person name="Numa H."/>
            <person name="Itoh T."/>
            <person name="Buell C.R."/>
            <person name="Matsumoto T."/>
        </authorList>
    </citation>
    <scope>GENOME REANNOTATION</scope>
    <source>
        <strain>cv. Nipponbare</strain>
    </source>
</reference>
<reference key="4">
    <citation type="journal article" date="2003" name="Science">
        <title>Collection, mapping, and annotation of over 28,000 cDNA clones from japonica rice.</title>
        <authorList>
            <consortium name="The rice full-length cDNA consortium"/>
        </authorList>
    </citation>
    <scope>NUCLEOTIDE SEQUENCE [LARGE SCALE MRNA]</scope>
    <source>
        <strain>cv. Nipponbare</strain>
    </source>
</reference>
<comment type="catalytic activity">
    <reaction>
        <text>S-ubiquitinyl-[E2 ubiquitin-conjugating enzyme]-L-cysteine + [acceptor protein]-L-lysine = [E2 ubiquitin-conjugating enzyme]-L-cysteine + N(6)-ubiquitinyl-[acceptor protein]-L-lysine.</text>
        <dbReference type="EC" id="2.3.2.27"/>
    </reaction>
</comment>
<comment type="pathway">
    <text>Protein modification; protein ubiquitination.</text>
</comment>
<comment type="sequence caution" evidence="3">
    <conflict type="frameshift">
        <sequence resource="EMBL" id="AK100927"/>
    </conflict>
</comment>
<comment type="sequence caution" evidence="3">
    <conflict type="erroneous gene model prediction">
        <sequence resource="EMBL-CDS" id="BAC79950"/>
    </conflict>
</comment>
<proteinExistence type="evidence at transcript level"/>
<gene>
    <name type="primary">XBOS34</name>
    <name type="ordered locus">Os07g0446100</name>
    <name type="ordered locus">LOC_Os07g26490</name>
    <name type="ORF">P0030H06.109-1</name>
    <name type="ORF">P0030H06.109-2</name>
</gene>
<keyword id="KW-0040">ANK repeat</keyword>
<keyword id="KW-0479">Metal-binding</keyword>
<keyword id="KW-1185">Reference proteome</keyword>
<keyword id="KW-0677">Repeat</keyword>
<keyword id="KW-0808">Transferase</keyword>
<keyword id="KW-0833">Ubl conjugation pathway</keyword>
<keyword id="KW-0862">Zinc</keyword>
<keyword id="KW-0863">Zinc-finger</keyword>
<accession>Q7XI08</accession>
<accession>A0A0P0X5W8</accession>
<accession>Q7XI07</accession>
<dbReference type="EC" id="2.3.2.27"/>
<dbReference type="EMBL" id="AP004395">
    <property type="protein sequence ID" value="BAC79949.1"/>
    <property type="molecule type" value="Genomic_DNA"/>
</dbReference>
<dbReference type="EMBL" id="AP004395">
    <property type="protein sequence ID" value="BAC79950.1"/>
    <property type="status" value="ALT_SEQ"/>
    <property type="molecule type" value="Genomic_DNA"/>
</dbReference>
<dbReference type="EMBL" id="AP008213">
    <property type="protein sequence ID" value="BAF21449.1"/>
    <property type="molecule type" value="Genomic_DNA"/>
</dbReference>
<dbReference type="EMBL" id="AP014963">
    <property type="protein sequence ID" value="BAT01291.1"/>
    <property type="molecule type" value="Genomic_DNA"/>
</dbReference>
<dbReference type="EMBL" id="AK100927">
    <property type="status" value="NOT_ANNOTATED_CDS"/>
    <property type="molecule type" value="mRNA"/>
</dbReference>
<dbReference type="RefSeq" id="XP_015647431.1">
    <property type="nucleotide sequence ID" value="XM_015791945.1"/>
</dbReference>
<dbReference type="SMR" id="Q7XI08"/>
<dbReference type="FunCoup" id="Q7XI08">
    <property type="interactions" value="535"/>
</dbReference>
<dbReference type="STRING" id="39947.Q7XI08"/>
<dbReference type="PaxDb" id="39947-Q7XI08"/>
<dbReference type="EnsemblPlants" id="Os07t0446100-01">
    <property type="protein sequence ID" value="Os07t0446100-01"/>
    <property type="gene ID" value="Os07g0446100"/>
</dbReference>
<dbReference type="Gramene" id="Os07t0446100-01">
    <property type="protein sequence ID" value="Os07t0446100-01"/>
    <property type="gene ID" value="Os07g0446100"/>
</dbReference>
<dbReference type="KEGG" id="dosa:Os07g0446100"/>
<dbReference type="eggNOG" id="ENOG502QQ81">
    <property type="taxonomic scope" value="Eukaryota"/>
</dbReference>
<dbReference type="HOGENOM" id="CLU_027253_2_0_1"/>
<dbReference type="InParanoid" id="Q7XI08"/>
<dbReference type="OMA" id="SMLGFWK"/>
<dbReference type="OrthoDB" id="1711136at2759"/>
<dbReference type="UniPathway" id="UPA00143"/>
<dbReference type="Proteomes" id="UP000000763">
    <property type="component" value="Chromosome 7"/>
</dbReference>
<dbReference type="Proteomes" id="UP000059680">
    <property type="component" value="Chromosome 7"/>
</dbReference>
<dbReference type="ExpressionAtlas" id="Q7XI08">
    <property type="expression patterns" value="baseline and differential"/>
</dbReference>
<dbReference type="GO" id="GO:0016740">
    <property type="term" value="F:transferase activity"/>
    <property type="evidence" value="ECO:0007669"/>
    <property type="project" value="UniProtKB-KW"/>
</dbReference>
<dbReference type="GO" id="GO:0008270">
    <property type="term" value="F:zinc ion binding"/>
    <property type="evidence" value="ECO:0007669"/>
    <property type="project" value="UniProtKB-KW"/>
</dbReference>
<dbReference type="GO" id="GO:0016567">
    <property type="term" value="P:protein ubiquitination"/>
    <property type="evidence" value="ECO:0007669"/>
    <property type="project" value="UniProtKB-UniPathway"/>
</dbReference>
<dbReference type="CDD" id="cd23129">
    <property type="entry name" value="RING-HC_XBAT35-like"/>
    <property type="match status" value="1"/>
</dbReference>
<dbReference type="Gene3D" id="1.25.40.20">
    <property type="entry name" value="Ankyrin repeat-containing domain"/>
    <property type="match status" value="1"/>
</dbReference>
<dbReference type="Gene3D" id="3.30.40.10">
    <property type="entry name" value="Zinc/RING finger domain, C3HC4 (zinc finger)"/>
    <property type="match status" value="1"/>
</dbReference>
<dbReference type="InterPro" id="IPR002110">
    <property type="entry name" value="Ankyrin_rpt"/>
</dbReference>
<dbReference type="InterPro" id="IPR036770">
    <property type="entry name" value="Ankyrin_rpt-contain_sf"/>
</dbReference>
<dbReference type="InterPro" id="IPR050889">
    <property type="entry name" value="Dendritic_Spine_Reg/Scaffold"/>
</dbReference>
<dbReference type="InterPro" id="IPR001841">
    <property type="entry name" value="Znf_RING"/>
</dbReference>
<dbReference type="InterPro" id="IPR013083">
    <property type="entry name" value="Znf_RING/FYVE/PHD"/>
</dbReference>
<dbReference type="PANTHER" id="PTHR24166:SF45">
    <property type="entry name" value="E3 UBIQUITIN-PROTEIN LIGASE XBAT35"/>
    <property type="match status" value="1"/>
</dbReference>
<dbReference type="PANTHER" id="PTHR24166">
    <property type="entry name" value="ROLLING PEBBLES, ISOFORM B"/>
    <property type="match status" value="1"/>
</dbReference>
<dbReference type="Pfam" id="PF00023">
    <property type="entry name" value="Ank"/>
    <property type="match status" value="1"/>
</dbReference>
<dbReference type="Pfam" id="PF12796">
    <property type="entry name" value="Ank_2"/>
    <property type="match status" value="1"/>
</dbReference>
<dbReference type="Pfam" id="PF13920">
    <property type="entry name" value="zf-C3HC4_3"/>
    <property type="match status" value="1"/>
</dbReference>
<dbReference type="SMART" id="SM00248">
    <property type="entry name" value="ANK"/>
    <property type="match status" value="3"/>
</dbReference>
<dbReference type="SMART" id="SM00184">
    <property type="entry name" value="RING"/>
    <property type="match status" value="1"/>
</dbReference>
<dbReference type="SUPFAM" id="SSF48403">
    <property type="entry name" value="Ankyrin repeat"/>
    <property type="match status" value="1"/>
</dbReference>
<dbReference type="SUPFAM" id="SSF57850">
    <property type="entry name" value="RING/U-box"/>
    <property type="match status" value="1"/>
</dbReference>
<dbReference type="PROSITE" id="PS50297">
    <property type="entry name" value="ANK_REP_REGION"/>
    <property type="match status" value="1"/>
</dbReference>
<dbReference type="PROSITE" id="PS50088">
    <property type="entry name" value="ANK_REPEAT"/>
    <property type="match status" value="2"/>
</dbReference>
<dbReference type="PROSITE" id="PS50089">
    <property type="entry name" value="ZF_RING_2"/>
    <property type="match status" value="1"/>
</dbReference>
<evidence type="ECO:0000255" key="1">
    <source>
        <dbReference type="PROSITE-ProRule" id="PRU00175"/>
    </source>
</evidence>
<evidence type="ECO:0000256" key="2">
    <source>
        <dbReference type="SAM" id="MobiDB-lite"/>
    </source>
</evidence>
<evidence type="ECO:0000305" key="3"/>
<feature type="chain" id="PRO_0000395748" description="Probable E3 ubiquitin-protein ligase XBOS34">
    <location>
        <begin position="1"/>
        <end position="513"/>
    </location>
</feature>
<feature type="repeat" description="ANK 1">
    <location>
        <begin position="39"/>
        <end position="69"/>
    </location>
</feature>
<feature type="repeat" description="ANK 2">
    <location>
        <begin position="75"/>
        <end position="104"/>
    </location>
</feature>
<feature type="repeat" description="ANK 3">
    <location>
        <begin position="108"/>
        <end position="137"/>
    </location>
</feature>
<feature type="zinc finger region" description="RING-type" evidence="1">
    <location>
        <begin position="462"/>
        <end position="501"/>
    </location>
</feature>
<feature type="region of interest" description="Disordered" evidence="2">
    <location>
        <begin position="309"/>
        <end position="378"/>
    </location>
</feature>
<feature type="region of interest" description="Disordered" evidence="2">
    <location>
        <begin position="423"/>
        <end position="455"/>
    </location>
</feature>
<feature type="compositionally biased region" description="Polar residues" evidence="2">
    <location>
        <begin position="309"/>
        <end position="327"/>
    </location>
</feature>
<feature type="compositionally biased region" description="Polar residues" evidence="2">
    <location>
        <begin position="335"/>
        <end position="355"/>
    </location>
</feature>
<feature type="compositionally biased region" description="Low complexity" evidence="2">
    <location>
        <begin position="361"/>
        <end position="378"/>
    </location>
</feature>
<feature type="compositionally biased region" description="Basic and acidic residues" evidence="2">
    <location>
        <begin position="436"/>
        <end position="446"/>
    </location>
</feature>
<name>XB34_ORYSJ</name>
<sequence length="513" mass="54729">MGLQQSKEELVYQQVNYGNADGIRALRAQGAGLEWIDKEGKTPLMVASMRPDLINVVQVLIELGANVNAYRPGSYCGTALHHAAKKGLEQTVHLLLSHGANPFITNDDCHTALDLAREKGHVNVVRAIEGRISLFCGWMRENYGPGFLEAFAPQFLTRKIWAVILPREARNQTRPLKLELTIYPELQASKPQAVIKLWKCQLEEPKFNQANPSVTIFDKGTRTRYKLLPVCEGDKQQLQWFYSACCGIPQVASMVPAQPANAPLPNPSSASSLPSVISTPSKEDAELAMAINASILSAIAEGVPDVQPITTTTATNDWGNPPSNSLNGWGPPDTSAPSKTSGQVPVVTSSSSTYNGWDVPGTSSGQSSSKHNKSQNSTFVVPQEALPSLPVPTAPPLAVGTFYDGPIQYPSIDSTPVDVTMPSADGGTAVSSAKPAENEGDAKPAESDANASNSGNTPPGTCVICLDAPVEGACIPCGHMAGCMSCLKDIESKKWGCPICRAKINQIIRLYAV</sequence>
<organism>
    <name type="scientific">Oryza sativa subsp. japonica</name>
    <name type="common">Rice</name>
    <dbReference type="NCBI Taxonomy" id="39947"/>
    <lineage>
        <taxon>Eukaryota</taxon>
        <taxon>Viridiplantae</taxon>
        <taxon>Streptophyta</taxon>
        <taxon>Embryophyta</taxon>
        <taxon>Tracheophyta</taxon>
        <taxon>Spermatophyta</taxon>
        <taxon>Magnoliopsida</taxon>
        <taxon>Liliopsida</taxon>
        <taxon>Poales</taxon>
        <taxon>Poaceae</taxon>
        <taxon>BOP clade</taxon>
        <taxon>Oryzoideae</taxon>
        <taxon>Oryzeae</taxon>
        <taxon>Oryzinae</taxon>
        <taxon>Oryza</taxon>
        <taxon>Oryza sativa</taxon>
    </lineage>
</organism>